<sequence length="247" mass="25682">MWGPGVTAEGLSVAPAPPPLLPLLLLLALALVAPSRGGGGCAELACGERERCCDATNATAVRCCKLPLHAFLDNVGWFVRKLSGLLILLVLFAIGYFLQRIICPSPRRYPRGQARPGQRPGPPGGAGPLGGAGPPDDDDDSPALLRDEAAAGSQDSLLDSGGGGRGRGGGGRSDPSCASEHEMRVVSPVFLQLPSYEEVKYLPTYEESMRLQQLSPGEVVLPVSVLGRPRGGVAAEPDGGEGRYPLI</sequence>
<proteinExistence type="evidence at protein level"/>
<organism>
    <name type="scientific">Homo sapiens</name>
    <name type="common">Human</name>
    <dbReference type="NCBI Taxonomy" id="9606"/>
    <lineage>
        <taxon>Eukaryota</taxon>
        <taxon>Metazoa</taxon>
        <taxon>Chordata</taxon>
        <taxon>Craniata</taxon>
        <taxon>Vertebrata</taxon>
        <taxon>Euteleostomi</taxon>
        <taxon>Mammalia</taxon>
        <taxon>Eutheria</taxon>
        <taxon>Euarchontoglires</taxon>
        <taxon>Primates</taxon>
        <taxon>Haplorrhini</taxon>
        <taxon>Catarrhini</taxon>
        <taxon>Hominidae</taxon>
        <taxon>Homo</taxon>
    </lineage>
</organism>
<evidence type="ECO:0000255" key="1"/>
<evidence type="ECO:0000256" key="2">
    <source>
        <dbReference type="SAM" id="MobiDB-lite"/>
    </source>
</evidence>
<evidence type="ECO:0000305" key="3"/>
<name>CC080_HUMAN</name>
<protein>
    <recommendedName>
        <fullName>Uncharacterized membrane protein C3orf80</fullName>
    </recommendedName>
</protein>
<keyword id="KW-0325">Glycoprotein</keyword>
<keyword id="KW-0472">Membrane</keyword>
<keyword id="KW-1267">Proteomics identification</keyword>
<keyword id="KW-1185">Reference proteome</keyword>
<keyword id="KW-0732">Signal</keyword>
<keyword id="KW-0812">Transmembrane</keyword>
<keyword id="KW-1133">Transmembrane helix</keyword>
<comment type="subcellular location">
    <subcellularLocation>
        <location evidence="3">Membrane</location>
        <topology evidence="3">Single-pass membrane protein</topology>
    </subcellularLocation>
</comment>
<accession>F5H4A9</accession>
<accession>Q8N5S4</accession>
<dbReference type="EMBL" id="AC112641">
    <property type="status" value="NOT_ANNOTATED_CDS"/>
    <property type="molecule type" value="Genomic_DNA"/>
</dbReference>
<dbReference type="EMBL" id="BC031660">
    <property type="protein sequence ID" value="AAH31660.1"/>
    <property type="molecule type" value="mRNA"/>
</dbReference>
<dbReference type="CCDS" id="CCDS54667.1"/>
<dbReference type="RefSeq" id="NP_001161686.1">
    <property type="nucleotide sequence ID" value="NM_001168214.2"/>
</dbReference>
<dbReference type="SMR" id="F5H4A9"/>
<dbReference type="FunCoup" id="F5H4A9">
    <property type="interactions" value="4"/>
</dbReference>
<dbReference type="STRING" id="9606.ENSP00000313324"/>
<dbReference type="GlyCosmos" id="F5H4A9">
    <property type="glycosylation" value="1 site, No reported glycans"/>
</dbReference>
<dbReference type="GlyGen" id="F5H4A9">
    <property type="glycosylation" value="1 site"/>
</dbReference>
<dbReference type="iPTMnet" id="F5H4A9"/>
<dbReference type="PhosphoSitePlus" id="F5H4A9"/>
<dbReference type="BioMuta" id="C3orf80"/>
<dbReference type="jPOST" id="F5H4A9"/>
<dbReference type="MassIVE" id="F5H4A9"/>
<dbReference type="PaxDb" id="9606-ENSP00000313324"/>
<dbReference type="PeptideAtlas" id="F5H4A9"/>
<dbReference type="ProteomicsDB" id="26516"/>
<dbReference type="Antibodypedia" id="50240">
    <property type="antibodies" value="5 antibodies from 5 providers"/>
</dbReference>
<dbReference type="DNASU" id="401097"/>
<dbReference type="Ensembl" id="ENST00000326474.5">
    <property type="protein sequence ID" value="ENSP00000313324.3"/>
    <property type="gene ID" value="ENSG00000180044.6"/>
</dbReference>
<dbReference type="GeneID" id="401097"/>
<dbReference type="KEGG" id="hsa:401097"/>
<dbReference type="MANE-Select" id="ENST00000326474.5">
    <property type="protein sequence ID" value="ENSP00000313324.3"/>
    <property type="RefSeq nucleotide sequence ID" value="NM_001168214.2"/>
    <property type="RefSeq protein sequence ID" value="NP_001161686.1"/>
</dbReference>
<dbReference type="UCSC" id="uc021xgp.2">
    <property type="organism name" value="human"/>
</dbReference>
<dbReference type="AGR" id="HGNC:40048"/>
<dbReference type="CTD" id="401097"/>
<dbReference type="GeneCards" id="C3orf80"/>
<dbReference type="HGNC" id="HGNC:40048">
    <property type="gene designation" value="C3orf80"/>
</dbReference>
<dbReference type="HPA" id="ENSG00000180044">
    <property type="expression patterns" value="Group enriched (brain, esophagus, intestine)"/>
</dbReference>
<dbReference type="neXtProt" id="NX_F5H4A9"/>
<dbReference type="OpenTargets" id="ENSG00000180044"/>
<dbReference type="VEuPathDB" id="HostDB:ENSG00000180044"/>
<dbReference type="eggNOG" id="ENOG502S2DR">
    <property type="taxonomic scope" value="Eukaryota"/>
</dbReference>
<dbReference type="GeneTree" id="ENSGT00390000005823"/>
<dbReference type="HOGENOM" id="CLU_1363090_0_0_1"/>
<dbReference type="InParanoid" id="F5H4A9"/>
<dbReference type="OMA" id="QESCCSY"/>
<dbReference type="OrthoDB" id="9837880at2759"/>
<dbReference type="PAN-GO" id="F5H4A9">
    <property type="GO annotations" value="0 GO annotations based on evolutionary models"/>
</dbReference>
<dbReference type="PhylomeDB" id="F5H4A9"/>
<dbReference type="TreeFam" id="TF337543"/>
<dbReference type="PathwayCommons" id="F5H4A9"/>
<dbReference type="BioGRID-ORCS" id="401097">
    <property type="hits" value="10 hits in 1073 CRISPR screens"/>
</dbReference>
<dbReference type="GenomeRNAi" id="401097"/>
<dbReference type="Pharos" id="F5H4A9">
    <property type="development level" value="Tdark"/>
</dbReference>
<dbReference type="PRO" id="PR:F5H4A9"/>
<dbReference type="Proteomes" id="UP000005640">
    <property type="component" value="Chromosome 3"/>
</dbReference>
<dbReference type="RNAct" id="F5H4A9">
    <property type="molecule type" value="protein"/>
</dbReference>
<dbReference type="Bgee" id="ENSG00000180044">
    <property type="expression patterns" value="Expressed in endothelial cell and 112 other cell types or tissues"/>
</dbReference>
<dbReference type="ExpressionAtlas" id="F5H4A9">
    <property type="expression patterns" value="baseline and differential"/>
</dbReference>
<dbReference type="GO" id="GO:0016020">
    <property type="term" value="C:membrane"/>
    <property type="evidence" value="ECO:0007669"/>
    <property type="project" value="UniProtKB-SubCell"/>
</dbReference>
<dbReference type="InterPro" id="IPR031696">
    <property type="entry name" value="DUF4719"/>
</dbReference>
<dbReference type="PANTHER" id="PTHR38505">
    <property type="entry name" value="HYPOTHETICAL PROTEIN LOC100362176"/>
    <property type="match status" value="1"/>
</dbReference>
<dbReference type="PANTHER" id="PTHR38505:SF1">
    <property type="entry name" value="RIKEN CDNA 1110032F04 GENE"/>
    <property type="match status" value="1"/>
</dbReference>
<dbReference type="Pfam" id="PF15843">
    <property type="entry name" value="DUF4719"/>
    <property type="match status" value="1"/>
</dbReference>
<gene>
    <name type="primary">C3orf80</name>
</gene>
<feature type="signal peptide" evidence="1">
    <location>
        <begin position="1"/>
        <end position="35"/>
    </location>
</feature>
<feature type="chain" id="PRO_0000413691" description="Uncharacterized membrane protein C3orf80">
    <location>
        <begin position="36"/>
        <end position="247"/>
    </location>
</feature>
<feature type="transmembrane region" description="Helical" evidence="1">
    <location>
        <begin position="82"/>
        <end position="102"/>
    </location>
</feature>
<feature type="region of interest" description="Disordered" evidence="2">
    <location>
        <begin position="109"/>
        <end position="179"/>
    </location>
</feature>
<feature type="compositionally biased region" description="Gly residues" evidence="2">
    <location>
        <begin position="160"/>
        <end position="172"/>
    </location>
</feature>
<feature type="glycosylation site" description="N-linked (GlcNAc...) asparagine" evidence="1">
    <location>
        <position position="57"/>
    </location>
</feature>
<reference key="1">
    <citation type="journal article" date="2006" name="Nature">
        <title>The DNA sequence, annotation and analysis of human chromosome 3.</title>
        <authorList>
            <person name="Muzny D.M."/>
            <person name="Scherer S.E."/>
            <person name="Kaul R."/>
            <person name="Wang J."/>
            <person name="Yu J."/>
            <person name="Sudbrak R."/>
            <person name="Buhay C.J."/>
            <person name="Chen R."/>
            <person name="Cree A."/>
            <person name="Ding Y."/>
            <person name="Dugan-Rocha S."/>
            <person name="Gill R."/>
            <person name="Gunaratne P."/>
            <person name="Harris R.A."/>
            <person name="Hawes A.C."/>
            <person name="Hernandez J."/>
            <person name="Hodgson A.V."/>
            <person name="Hume J."/>
            <person name="Jackson A."/>
            <person name="Khan Z.M."/>
            <person name="Kovar-Smith C."/>
            <person name="Lewis L.R."/>
            <person name="Lozado R.J."/>
            <person name="Metzker M.L."/>
            <person name="Milosavljevic A."/>
            <person name="Miner G.R."/>
            <person name="Morgan M.B."/>
            <person name="Nazareth L.V."/>
            <person name="Scott G."/>
            <person name="Sodergren E."/>
            <person name="Song X.-Z."/>
            <person name="Steffen D."/>
            <person name="Wei S."/>
            <person name="Wheeler D.A."/>
            <person name="Wright M.W."/>
            <person name="Worley K.C."/>
            <person name="Yuan Y."/>
            <person name="Zhang Z."/>
            <person name="Adams C.Q."/>
            <person name="Ansari-Lari M.A."/>
            <person name="Ayele M."/>
            <person name="Brown M.J."/>
            <person name="Chen G."/>
            <person name="Chen Z."/>
            <person name="Clendenning J."/>
            <person name="Clerc-Blankenburg K.P."/>
            <person name="Chen R."/>
            <person name="Chen Z."/>
            <person name="Davis C."/>
            <person name="Delgado O."/>
            <person name="Dinh H.H."/>
            <person name="Dong W."/>
            <person name="Draper H."/>
            <person name="Ernst S."/>
            <person name="Fu G."/>
            <person name="Gonzalez-Garay M.L."/>
            <person name="Garcia D.K."/>
            <person name="Gillett W."/>
            <person name="Gu J."/>
            <person name="Hao B."/>
            <person name="Haugen E."/>
            <person name="Havlak P."/>
            <person name="He X."/>
            <person name="Hennig S."/>
            <person name="Hu S."/>
            <person name="Huang W."/>
            <person name="Jackson L.R."/>
            <person name="Jacob L.S."/>
            <person name="Kelly S.H."/>
            <person name="Kube M."/>
            <person name="Levy R."/>
            <person name="Li Z."/>
            <person name="Liu B."/>
            <person name="Liu J."/>
            <person name="Liu W."/>
            <person name="Lu J."/>
            <person name="Maheshwari M."/>
            <person name="Nguyen B.-V."/>
            <person name="Okwuonu G.O."/>
            <person name="Palmeiri A."/>
            <person name="Pasternak S."/>
            <person name="Perez L.M."/>
            <person name="Phelps K.A."/>
            <person name="Plopper F.J."/>
            <person name="Qiang B."/>
            <person name="Raymond C."/>
            <person name="Rodriguez R."/>
            <person name="Saenphimmachak C."/>
            <person name="Santibanez J."/>
            <person name="Shen H."/>
            <person name="Shen Y."/>
            <person name="Subramanian S."/>
            <person name="Tabor P.E."/>
            <person name="Verduzco D."/>
            <person name="Waldron L."/>
            <person name="Wang J."/>
            <person name="Wang J."/>
            <person name="Wang Q."/>
            <person name="Williams G.A."/>
            <person name="Wong G.K.-S."/>
            <person name="Yao Z."/>
            <person name="Zhang J."/>
            <person name="Zhang X."/>
            <person name="Zhao G."/>
            <person name="Zhou J."/>
            <person name="Zhou Y."/>
            <person name="Nelson D."/>
            <person name="Lehrach H."/>
            <person name="Reinhardt R."/>
            <person name="Naylor S.L."/>
            <person name="Yang H."/>
            <person name="Olson M."/>
            <person name="Weinstock G."/>
            <person name="Gibbs R.A."/>
        </authorList>
    </citation>
    <scope>NUCLEOTIDE SEQUENCE [LARGE SCALE GENOMIC DNA]</scope>
</reference>
<reference key="2">
    <citation type="journal article" date="2004" name="Genome Res.">
        <title>The status, quality, and expansion of the NIH full-length cDNA project: the Mammalian Gene Collection (MGC).</title>
        <authorList>
            <consortium name="The MGC Project Team"/>
        </authorList>
    </citation>
    <scope>NUCLEOTIDE SEQUENCE [LARGE SCALE MRNA] OF 70-247</scope>
    <source>
        <tissue>Brain</tissue>
    </source>
</reference>